<comment type="catalytic activity">
    <reaction evidence="1">
        <text>tRNA(Gly) + glycine + ATP = glycyl-tRNA(Gly) + AMP + diphosphate</text>
        <dbReference type="Rhea" id="RHEA:16013"/>
        <dbReference type="Rhea" id="RHEA-COMP:9664"/>
        <dbReference type="Rhea" id="RHEA-COMP:9683"/>
        <dbReference type="ChEBI" id="CHEBI:30616"/>
        <dbReference type="ChEBI" id="CHEBI:33019"/>
        <dbReference type="ChEBI" id="CHEBI:57305"/>
        <dbReference type="ChEBI" id="CHEBI:78442"/>
        <dbReference type="ChEBI" id="CHEBI:78522"/>
        <dbReference type="ChEBI" id="CHEBI:456215"/>
        <dbReference type="EC" id="6.1.1.14"/>
    </reaction>
</comment>
<comment type="subunit">
    <text evidence="1">Tetramer of two alpha and two beta subunits.</text>
</comment>
<comment type="subcellular location">
    <subcellularLocation>
        <location evidence="1">Cytoplasm</location>
    </subcellularLocation>
</comment>
<comment type="similarity">
    <text evidence="1">Belongs to the class-II aminoacyl-tRNA synthetase family.</text>
</comment>
<name>SYGA_MARMM</name>
<evidence type="ECO:0000255" key="1">
    <source>
        <dbReference type="HAMAP-Rule" id="MF_00254"/>
    </source>
</evidence>
<sequence length="296" mass="33308">MTAEKAPSFQELILRLQSYWASKGCAILQPYDVEVGAGTLHPATTLRSLGPRPWKAAYVQPSRRPGDGRYGENPNRLQHYYQFQVLLKPCPTDLQDLYLGSLDAIGIDRDLHDVRFVEDDWENPTVGAWGLGWEVWCDGMEVSQFTYFQQVGGQDVELVSGELTYGLERLAMYVQGVENVYDLDFNGAGMTYGDVFLEAEKQYSEFNFEHADVDMLIEWFKGAENQCMALLNLDKPLPLPAYDFCLKASHLFNLVDARGAISVAERASWIARVRELAKGCADAWVKSERALAEAAE</sequence>
<accession>Q0AML4</accession>
<feature type="chain" id="PRO_1000047444" description="Glycine--tRNA ligase alpha subunit">
    <location>
        <begin position="1"/>
        <end position="296"/>
    </location>
</feature>
<protein>
    <recommendedName>
        <fullName evidence="1">Glycine--tRNA ligase alpha subunit</fullName>
        <ecNumber evidence="1">6.1.1.14</ecNumber>
    </recommendedName>
    <alternativeName>
        <fullName evidence="1">Glycyl-tRNA synthetase alpha subunit</fullName>
        <shortName evidence="1">GlyRS</shortName>
    </alternativeName>
</protein>
<dbReference type="EC" id="6.1.1.14" evidence="1"/>
<dbReference type="EMBL" id="CP000449">
    <property type="protein sequence ID" value="ABI66473.1"/>
    <property type="molecule type" value="Genomic_DNA"/>
</dbReference>
<dbReference type="RefSeq" id="WP_011644118.1">
    <property type="nucleotide sequence ID" value="NC_008347.1"/>
</dbReference>
<dbReference type="SMR" id="Q0AML4"/>
<dbReference type="STRING" id="394221.Mmar10_2181"/>
<dbReference type="KEGG" id="mmr:Mmar10_2181"/>
<dbReference type="eggNOG" id="COG0752">
    <property type="taxonomic scope" value="Bacteria"/>
</dbReference>
<dbReference type="HOGENOM" id="CLU_057066_1_0_5"/>
<dbReference type="OrthoDB" id="9802183at2"/>
<dbReference type="Proteomes" id="UP000001964">
    <property type="component" value="Chromosome"/>
</dbReference>
<dbReference type="GO" id="GO:0005829">
    <property type="term" value="C:cytosol"/>
    <property type="evidence" value="ECO:0007669"/>
    <property type="project" value="TreeGrafter"/>
</dbReference>
<dbReference type="GO" id="GO:0005524">
    <property type="term" value="F:ATP binding"/>
    <property type="evidence" value="ECO:0007669"/>
    <property type="project" value="UniProtKB-UniRule"/>
</dbReference>
<dbReference type="GO" id="GO:0004820">
    <property type="term" value="F:glycine-tRNA ligase activity"/>
    <property type="evidence" value="ECO:0007669"/>
    <property type="project" value="UniProtKB-UniRule"/>
</dbReference>
<dbReference type="GO" id="GO:0006426">
    <property type="term" value="P:glycyl-tRNA aminoacylation"/>
    <property type="evidence" value="ECO:0007669"/>
    <property type="project" value="UniProtKB-UniRule"/>
</dbReference>
<dbReference type="CDD" id="cd00733">
    <property type="entry name" value="GlyRS_alpha_core"/>
    <property type="match status" value="1"/>
</dbReference>
<dbReference type="FunFam" id="3.30.930.10:FF:000006">
    <property type="entry name" value="Glycine--tRNA ligase alpha subunit"/>
    <property type="match status" value="1"/>
</dbReference>
<dbReference type="Gene3D" id="3.30.930.10">
    <property type="entry name" value="Bira Bifunctional Protein, Domain 2"/>
    <property type="match status" value="1"/>
</dbReference>
<dbReference type="Gene3D" id="1.20.58.180">
    <property type="entry name" value="Class II aaRS and biotin synthetases, domain 2"/>
    <property type="match status" value="1"/>
</dbReference>
<dbReference type="HAMAP" id="MF_00254">
    <property type="entry name" value="Gly_tRNA_synth_alpha"/>
    <property type="match status" value="1"/>
</dbReference>
<dbReference type="InterPro" id="IPR045864">
    <property type="entry name" value="aa-tRNA-synth_II/BPL/LPL"/>
</dbReference>
<dbReference type="InterPro" id="IPR006194">
    <property type="entry name" value="Gly-tRNA-synth_heterodimer"/>
</dbReference>
<dbReference type="InterPro" id="IPR002310">
    <property type="entry name" value="Gly-tRNA_ligase_asu"/>
</dbReference>
<dbReference type="NCBIfam" id="TIGR00388">
    <property type="entry name" value="glyQ"/>
    <property type="match status" value="1"/>
</dbReference>
<dbReference type="NCBIfam" id="NF006827">
    <property type="entry name" value="PRK09348.1"/>
    <property type="match status" value="1"/>
</dbReference>
<dbReference type="PANTHER" id="PTHR30075:SF2">
    <property type="entry name" value="GLYCINE--TRNA LIGASE, CHLOROPLASTIC_MITOCHONDRIAL 2"/>
    <property type="match status" value="1"/>
</dbReference>
<dbReference type="PANTHER" id="PTHR30075">
    <property type="entry name" value="GLYCYL-TRNA SYNTHETASE"/>
    <property type="match status" value="1"/>
</dbReference>
<dbReference type="Pfam" id="PF02091">
    <property type="entry name" value="tRNA-synt_2e"/>
    <property type="match status" value="1"/>
</dbReference>
<dbReference type="PRINTS" id="PR01044">
    <property type="entry name" value="TRNASYNTHGA"/>
</dbReference>
<dbReference type="SUPFAM" id="SSF55681">
    <property type="entry name" value="Class II aaRS and biotin synthetases"/>
    <property type="match status" value="1"/>
</dbReference>
<dbReference type="PROSITE" id="PS50861">
    <property type="entry name" value="AA_TRNA_LIGASE_II_GLYAB"/>
    <property type="match status" value="1"/>
</dbReference>
<reference key="1">
    <citation type="submission" date="2006-08" db="EMBL/GenBank/DDBJ databases">
        <title>Complete sequence of Maricaulis maris MCS10.</title>
        <authorList>
            <consortium name="US DOE Joint Genome Institute"/>
            <person name="Copeland A."/>
            <person name="Lucas S."/>
            <person name="Lapidus A."/>
            <person name="Barry K."/>
            <person name="Detter J.C."/>
            <person name="Glavina del Rio T."/>
            <person name="Hammon N."/>
            <person name="Israni S."/>
            <person name="Dalin E."/>
            <person name="Tice H."/>
            <person name="Pitluck S."/>
            <person name="Saunders E."/>
            <person name="Brettin T."/>
            <person name="Bruce D."/>
            <person name="Han C."/>
            <person name="Tapia R."/>
            <person name="Gilna P."/>
            <person name="Schmutz J."/>
            <person name="Larimer F."/>
            <person name="Land M."/>
            <person name="Hauser L."/>
            <person name="Kyrpides N."/>
            <person name="Mikhailova N."/>
            <person name="Viollier P."/>
            <person name="Stephens C."/>
            <person name="Richardson P."/>
        </authorList>
    </citation>
    <scope>NUCLEOTIDE SEQUENCE [LARGE SCALE GENOMIC DNA]</scope>
    <source>
        <strain>MCS10</strain>
    </source>
</reference>
<gene>
    <name evidence="1" type="primary">glyQ</name>
    <name type="ordered locus">Mmar10_2181</name>
</gene>
<proteinExistence type="inferred from homology"/>
<keyword id="KW-0030">Aminoacyl-tRNA synthetase</keyword>
<keyword id="KW-0067">ATP-binding</keyword>
<keyword id="KW-0963">Cytoplasm</keyword>
<keyword id="KW-0436">Ligase</keyword>
<keyword id="KW-0547">Nucleotide-binding</keyword>
<keyword id="KW-0648">Protein biosynthesis</keyword>
<keyword id="KW-1185">Reference proteome</keyword>
<organism>
    <name type="scientific">Maricaulis maris (strain MCS10)</name>
    <name type="common">Caulobacter maris</name>
    <dbReference type="NCBI Taxonomy" id="394221"/>
    <lineage>
        <taxon>Bacteria</taxon>
        <taxon>Pseudomonadati</taxon>
        <taxon>Pseudomonadota</taxon>
        <taxon>Alphaproteobacteria</taxon>
        <taxon>Maricaulales</taxon>
        <taxon>Maricaulaceae</taxon>
        <taxon>Maricaulis</taxon>
    </lineage>
</organism>